<keyword id="KW-1185">Reference proteome</keyword>
<keyword id="KW-0687">Ribonucleoprotein</keyword>
<keyword id="KW-0689">Ribosomal protein</keyword>
<keyword id="KW-0694">RNA-binding</keyword>
<keyword id="KW-0699">rRNA-binding</keyword>
<proteinExistence type="inferred from homology"/>
<gene>
    <name evidence="1" type="primary">rplB</name>
    <name type="ordered locus">CD630_00760</name>
</gene>
<feature type="chain" id="PRO_0000309901" description="Large ribosomal subunit protein uL2">
    <location>
        <begin position="1"/>
        <end position="276"/>
    </location>
</feature>
<feature type="region of interest" description="Disordered" evidence="2">
    <location>
        <begin position="219"/>
        <end position="276"/>
    </location>
</feature>
<feature type="compositionally biased region" description="Basic residues" evidence="2">
    <location>
        <begin position="258"/>
        <end position="276"/>
    </location>
</feature>
<sequence length="276" mass="29882">MAIKKFRPTSPALRQMTVLVSDEITCNQPEKSLLVNLKKNAGRNVHGRITVRHRGGGQKRKYRIIDFKRDKDGIPAKVATIEYDPNRTANIALLNYADGEKRYILAPVGINVGDTILSGLGADIKPGNCLALKDMPVGTIIHNIELKPGKGAQLVRSAGVSAQLMAKEGKNALLRLPSGEMRLVSINCKATIGQVGNIEHGNVVIGKAGRKRHMGIRPTVRGSVMNPNDHPHGGGEGRSPIGRPSPVTPWGKPALGYKTRKKNKASNKLIVSRRTK</sequence>
<dbReference type="EMBL" id="AM180355">
    <property type="protein sequence ID" value="CAJ66891.1"/>
    <property type="molecule type" value="Genomic_DNA"/>
</dbReference>
<dbReference type="RefSeq" id="WP_003421168.1">
    <property type="nucleotide sequence ID" value="NZ_JAUPES010000043.1"/>
</dbReference>
<dbReference type="RefSeq" id="YP_001086540.1">
    <property type="nucleotide sequence ID" value="NC_009089.1"/>
</dbReference>
<dbReference type="SMR" id="Q18CG3"/>
<dbReference type="STRING" id="272563.CD630_00760"/>
<dbReference type="EnsemblBacteria" id="CAJ66891">
    <property type="protein sequence ID" value="CAJ66891"/>
    <property type="gene ID" value="CD630_00760"/>
</dbReference>
<dbReference type="GeneID" id="66352574"/>
<dbReference type="KEGG" id="cdf:CD630_00760"/>
<dbReference type="KEGG" id="pdc:CDIF630_00142"/>
<dbReference type="PATRIC" id="fig|272563.120.peg.82"/>
<dbReference type="eggNOG" id="COG0090">
    <property type="taxonomic scope" value="Bacteria"/>
</dbReference>
<dbReference type="OrthoDB" id="9778722at2"/>
<dbReference type="PhylomeDB" id="Q18CG3"/>
<dbReference type="BioCyc" id="PDIF272563:G12WB-130-MONOMER"/>
<dbReference type="Proteomes" id="UP000001978">
    <property type="component" value="Chromosome"/>
</dbReference>
<dbReference type="GO" id="GO:0015934">
    <property type="term" value="C:large ribosomal subunit"/>
    <property type="evidence" value="ECO:0007669"/>
    <property type="project" value="InterPro"/>
</dbReference>
<dbReference type="GO" id="GO:0019843">
    <property type="term" value="F:rRNA binding"/>
    <property type="evidence" value="ECO:0007669"/>
    <property type="project" value="UniProtKB-UniRule"/>
</dbReference>
<dbReference type="GO" id="GO:0003735">
    <property type="term" value="F:structural constituent of ribosome"/>
    <property type="evidence" value="ECO:0007669"/>
    <property type="project" value="InterPro"/>
</dbReference>
<dbReference type="GO" id="GO:0016740">
    <property type="term" value="F:transferase activity"/>
    <property type="evidence" value="ECO:0007669"/>
    <property type="project" value="InterPro"/>
</dbReference>
<dbReference type="GO" id="GO:0002181">
    <property type="term" value="P:cytoplasmic translation"/>
    <property type="evidence" value="ECO:0007669"/>
    <property type="project" value="TreeGrafter"/>
</dbReference>
<dbReference type="FunFam" id="2.30.30.30:FF:000001">
    <property type="entry name" value="50S ribosomal protein L2"/>
    <property type="match status" value="1"/>
</dbReference>
<dbReference type="FunFam" id="2.40.50.140:FF:000003">
    <property type="entry name" value="50S ribosomal protein L2"/>
    <property type="match status" value="1"/>
</dbReference>
<dbReference type="FunFam" id="4.10.950.10:FF:000001">
    <property type="entry name" value="50S ribosomal protein L2"/>
    <property type="match status" value="1"/>
</dbReference>
<dbReference type="Gene3D" id="2.30.30.30">
    <property type="match status" value="1"/>
</dbReference>
<dbReference type="Gene3D" id="2.40.50.140">
    <property type="entry name" value="Nucleic acid-binding proteins"/>
    <property type="match status" value="1"/>
</dbReference>
<dbReference type="Gene3D" id="4.10.950.10">
    <property type="entry name" value="Ribosomal protein L2, domain 3"/>
    <property type="match status" value="1"/>
</dbReference>
<dbReference type="HAMAP" id="MF_01320_B">
    <property type="entry name" value="Ribosomal_uL2_B"/>
    <property type="match status" value="1"/>
</dbReference>
<dbReference type="InterPro" id="IPR012340">
    <property type="entry name" value="NA-bd_OB-fold"/>
</dbReference>
<dbReference type="InterPro" id="IPR014722">
    <property type="entry name" value="Rib_uL2_dom2"/>
</dbReference>
<dbReference type="InterPro" id="IPR002171">
    <property type="entry name" value="Ribosomal_uL2"/>
</dbReference>
<dbReference type="InterPro" id="IPR005880">
    <property type="entry name" value="Ribosomal_uL2_bac/org-type"/>
</dbReference>
<dbReference type="InterPro" id="IPR022669">
    <property type="entry name" value="Ribosomal_uL2_C"/>
</dbReference>
<dbReference type="InterPro" id="IPR022671">
    <property type="entry name" value="Ribosomal_uL2_CS"/>
</dbReference>
<dbReference type="InterPro" id="IPR014726">
    <property type="entry name" value="Ribosomal_uL2_dom3"/>
</dbReference>
<dbReference type="InterPro" id="IPR022666">
    <property type="entry name" value="Ribosomal_uL2_RNA-bd_dom"/>
</dbReference>
<dbReference type="InterPro" id="IPR008991">
    <property type="entry name" value="Translation_prot_SH3-like_sf"/>
</dbReference>
<dbReference type="NCBIfam" id="TIGR01171">
    <property type="entry name" value="rplB_bact"/>
    <property type="match status" value="1"/>
</dbReference>
<dbReference type="PANTHER" id="PTHR13691:SF5">
    <property type="entry name" value="LARGE RIBOSOMAL SUBUNIT PROTEIN UL2M"/>
    <property type="match status" value="1"/>
</dbReference>
<dbReference type="PANTHER" id="PTHR13691">
    <property type="entry name" value="RIBOSOMAL PROTEIN L2"/>
    <property type="match status" value="1"/>
</dbReference>
<dbReference type="Pfam" id="PF00181">
    <property type="entry name" value="Ribosomal_L2"/>
    <property type="match status" value="1"/>
</dbReference>
<dbReference type="Pfam" id="PF03947">
    <property type="entry name" value="Ribosomal_L2_C"/>
    <property type="match status" value="1"/>
</dbReference>
<dbReference type="PIRSF" id="PIRSF002158">
    <property type="entry name" value="Ribosomal_L2"/>
    <property type="match status" value="1"/>
</dbReference>
<dbReference type="SMART" id="SM01383">
    <property type="entry name" value="Ribosomal_L2"/>
    <property type="match status" value="1"/>
</dbReference>
<dbReference type="SMART" id="SM01382">
    <property type="entry name" value="Ribosomal_L2_C"/>
    <property type="match status" value="1"/>
</dbReference>
<dbReference type="SUPFAM" id="SSF50249">
    <property type="entry name" value="Nucleic acid-binding proteins"/>
    <property type="match status" value="1"/>
</dbReference>
<dbReference type="SUPFAM" id="SSF50104">
    <property type="entry name" value="Translation proteins SH3-like domain"/>
    <property type="match status" value="1"/>
</dbReference>
<dbReference type="PROSITE" id="PS00467">
    <property type="entry name" value="RIBOSOMAL_L2"/>
    <property type="match status" value="1"/>
</dbReference>
<protein>
    <recommendedName>
        <fullName evidence="1">Large ribosomal subunit protein uL2</fullName>
    </recommendedName>
    <alternativeName>
        <fullName evidence="3">50S ribosomal protein L2</fullName>
    </alternativeName>
</protein>
<reference key="1">
    <citation type="journal article" date="2006" name="Nat. Genet.">
        <title>The multidrug-resistant human pathogen Clostridium difficile has a highly mobile, mosaic genome.</title>
        <authorList>
            <person name="Sebaihia M."/>
            <person name="Wren B.W."/>
            <person name="Mullany P."/>
            <person name="Fairweather N.F."/>
            <person name="Minton N."/>
            <person name="Stabler R."/>
            <person name="Thomson N.R."/>
            <person name="Roberts A.P."/>
            <person name="Cerdeno-Tarraga A.M."/>
            <person name="Wang H."/>
            <person name="Holden M.T.G."/>
            <person name="Wright A."/>
            <person name="Churcher C."/>
            <person name="Quail M.A."/>
            <person name="Baker S."/>
            <person name="Bason N."/>
            <person name="Brooks K."/>
            <person name="Chillingworth T."/>
            <person name="Cronin A."/>
            <person name="Davis P."/>
            <person name="Dowd L."/>
            <person name="Fraser A."/>
            <person name="Feltwell T."/>
            <person name="Hance Z."/>
            <person name="Holroyd S."/>
            <person name="Jagels K."/>
            <person name="Moule S."/>
            <person name="Mungall K."/>
            <person name="Price C."/>
            <person name="Rabbinowitsch E."/>
            <person name="Sharp S."/>
            <person name="Simmonds M."/>
            <person name="Stevens K."/>
            <person name="Unwin L."/>
            <person name="Whithead S."/>
            <person name="Dupuy B."/>
            <person name="Dougan G."/>
            <person name="Barrell B."/>
            <person name="Parkhill J."/>
        </authorList>
    </citation>
    <scope>NUCLEOTIDE SEQUENCE [LARGE SCALE GENOMIC DNA]</scope>
    <source>
        <strain>630</strain>
    </source>
</reference>
<accession>Q18CG3</accession>
<evidence type="ECO:0000255" key="1">
    <source>
        <dbReference type="HAMAP-Rule" id="MF_01320"/>
    </source>
</evidence>
<evidence type="ECO:0000256" key="2">
    <source>
        <dbReference type="SAM" id="MobiDB-lite"/>
    </source>
</evidence>
<evidence type="ECO:0000305" key="3"/>
<organism>
    <name type="scientific">Clostridioides difficile (strain 630)</name>
    <name type="common">Peptoclostridium difficile</name>
    <dbReference type="NCBI Taxonomy" id="272563"/>
    <lineage>
        <taxon>Bacteria</taxon>
        <taxon>Bacillati</taxon>
        <taxon>Bacillota</taxon>
        <taxon>Clostridia</taxon>
        <taxon>Peptostreptococcales</taxon>
        <taxon>Peptostreptococcaceae</taxon>
        <taxon>Clostridioides</taxon>
    </lineage>
</organism>
<name>RL2_CLOD6</name>
<comment type="function">
    <text evidence="1">One of the primary rRNA binding proteins. Required for association of the 30S and 50S subunits to form the 70S ribosome, for tRNA binding and peptide bond formation. It has been suggested to have peptidyltransferase activity; this is somewhat controversial. Makes several contacts with the 16S rRNA in the 70S ribosome.</text>
</comment>
<comment type="subunit">
    <text evidence="1">Part of the 50S ribosomal subunit. Forms a bridge to the 30S subunit in the 70S ribosome.</text>
</comment>
<comment type="similarity">
    <text evidence="1">Belongs to the universal ribosomal protein uL2 family.</text>
</comment>